<proteinExistence type="predicted"/>
<dbReference type="EMBL" id="AY653733">
    <property type="protein sequence ID" value="AAV50650.1"/>
    <property type="molecule type" value="Genomic_DNA"/>
</dbReference>
<dbReference type="Proteomes" id="UP000001134">
    <property type="component" value="Genome"/>
</dbReference>
<dbReference type="Gene3D" id="3.30.870.10">
    <property type="entry name" value="Endonuclease Chain A"/>
    <property type="match status" value="1"/>
</dbReference>
<dbReference type="InterPro" id="IPR025202">
    <property type="entry name" value="PLD-like_dom"/>
</dbReference>
<dbReference type="Pfam" id="PF13091">
    <property type="entry name" value="PLDc_2"/>
    <property type="match status" value="1"/>
</dbReference>
<dbReference type="SUPFAM" id="SSF56024">
    <property type="entry name" value="Phospholipase D/nuclease"/>
    <property type="match status" value="1"/>
</dbReference>
<feature type="chain" id="PRO_0000071274" description="Uncharacterized protein L381">
    <location>
        <begin position="1"/>
        <end position="280"/>
    </location>
</feature>
<feature type="region of interest" description="Disordered" evidence="1">
    <location>
        <begin position="1"/>
        <end position="45"/>
    </location>
</feature>
<feature type="compositionally biased region" description="Basic residues" evidence="1">
    <location>
        <begin position="1"/>
        <end position="10"/>
    </location>
</feature>
<feature type="compositionally biased region" description="Basic and acidic residues" evidence="1">
    <location>
        <begin position="11"/>
        <end position="31"/>
    </location>
</feature>
<feature type="compositionally biased region" description="Acidic residues" evidence="1">
    <location>
        <begin position="32"/>
        <end position="41"/>
    </location>
</feature>
<reference key="1">
    <citation type="journal article" date="2004" name="Science">
        <title>The 1.2-megabase genome sequence of Mimivirus.</title>
        <authorList>
            <person name="Raoult D."/>
            <person name="Audic S."/>
            <person name="Robert C."/>
            <person name="Abergel C."/>
            <person name="Renesto P."/>
            <person name="Ogata H."/>
            <person name="La Scola B."/>
            <person name="Susan M."/>
            <person name="Claverie J.-M."/>
        </authorList>
    </citation>
    <scope>NUCLEOTIDE SEQUENCE [LARGE SCALE GENOMIC DNA]</scope>
    <source>
        <strain>Rowbotham-Bradford</strain>
    </source>
</reference>
<evidence type="ECO:0000256" key="1">
    <source>
        <dbReference type="SAM" id="MobiDB-lite"/>
    </source>
</evidence>
<organism>
    <name type="scientific">Acanthamoeba polyphaga mimivirus</name>
    <name type="common">APMV</name>
    <dbReference type="NCBI Taxonomy" id="212035"/>
    <lineage>
        <taxon>Viruses</taxon>
        <taxon>Varidnaviria</taxon>
        <taxon>Bamfordvirae</taxon>
        <taxon>Nucleocytoviricota</taxon>
        <taxon>Megaviricetes</taxon>
        <taxon>Imitervirales</taxon>
        <taxon>Mimiviridae</taxon>
        <taxon>Megamimivirinae</taxon>
        <taxon>Mimivirus</taxon>
        <taxon>Mimivirus bradfordmassiliense</taxon>
    </lineage>
</organism>
<protein>
    <recommendedName>
        <fullName>Uncharacterized protein L381</fullName>
    </recommendedName>
</protein>
<name>YL381_MIMIV</name>
<keyword id="KW-1185">Reference proteome</keyword>
<sequence>MSSSIKKLKKDTKDTDKTPSKKIYQETHNSEDSEDSEDSDNENNTITMFNSTQNFYKYINLNKIKSSNYHSEISDNSIRPYFENLEKHLVEYINKATYVIGCIAWLTNDNIISSLQQKKGIKIIVNKEEFLNPNMEIAKKNYYCTLRSKYQSLPNMFTSKCYCCSDSITSCKKFNKIFGSISMSENNNSSVLTCGIVNSLPKMHHKFLIFFDENLNPVGVWTGSYNLSKTSNFSLENALYITSQIVIAEYIKEFLAVYKHSENFNWKSGTLYGKLKNPVY</sequence>
<accession>Q5UQX2</accession>
<organismHost>
    <name type="scientific">Acanthamoeba polyphaga</name>
    <name type="common">Amoeba</name>
    <dbReference type="NCBI Taxonomy" id="5757"/>
</organismHost>
<gene>
    <name type="ordered locus">MIMI_L381</name>
</gene>